<reference key="1">
    <citation type="journal article" date="2009" name="BMC Genomics">
        <title>The complete genome sequence of Staphylothermus marinus reveals differences in sulfur metabolism among heterotrophic Crenarchaeota.</title>
        <authorList>
            <person name="Anderson I.J."/>
            <person name="Dharmarajan L."/>
            <person name="Rodriguez J."/>
            <person name="Hooper S."/>
            <person name="Porat I."/>
            <person name="Ulrich L.E."/>
            <person name="Elkins J.G."/>
            <person name="Mavromatis K."/>
            <person name="Sun H."/>
            <person name="Land M."/>
            <person name="Lapidus A."/>
            <person name="Lucas S."/>
            <person name="Barry K."/>
            <person name="Huber H."/>
            <person name="Zhulin I.B."/>
            <person name="Whitman W.B."/>
            <person name="Mukhopadhyay B."/>
            <person name="Woese C."/>
            <person name="Bristow J."/>
            <person name="Kyrpides N."/>
        </authorList>
    </citation>
    <scope>NUCLEOTIDE SEQUENCE [LARGE SCALE GENOMIC DNA]</scope>
    <source>
        <strain>ATCC 43588 / DSM 3639 / JCM 9404 / F1</strain>
    </source>
</reference>
<reference key="2">
    <citation type="journal article" date="2009" name="Stand. Genomic Sci.">
        <title>Complete genome sequence of Staphylothermus marinus Stetter and Fiala 1986 type strain F1.</title>
        <authorList>
            <person name="Anderson I.J."/>
            <person name="Sun H."/>
            <person name="Lapidus A."/>
            <person name="Copeland A."/>
            <person name="Glavina Del Rio T."/>
            <person name="Tice H."/>
            <person name="Dalin E."/>
            <person name="Lucas S."/>
            <person name="Barry K."/>
            <person name="Land M."/>
            <person name="Richardson P."/>
            <person name="Huber H."/>
            <person name="Kyrpides N.C."/>
        </authorList>
    </citation>
    <scope>NUCLEOTIDE SEQUENCE [LARGE SCALE GENOMIC DNA]</scope>
    <source>
        <strain>ATCC 43588 / DSM 3639 / JCM 9404 / F1</strain>
    </source>
</reference>
<dbReference type="EMBL" id="CP000575">
    <property type="protein sequence ID" value="ABN70017.1"/>
    <property type="molecule type" value="Genomic_DNA"/>
</dbReference>
<dbReference type="SMR" id="A3DN07"/>
<dbReference type="STRING" id="399550.Smar_0918"/>
<dbReference type="KEGG" id="smr:Smar_0918"/>
<dbReference type="eggNOG" id="arCOG04270">
    <property type="taxonomic scope" value="Archaea"/>
</dbReference>
<dbReference type="HOGENOM" id="CLU_100097_1_0_2"/>
<dbReference type="OrthoDB" id="5935at2157"/>
<dbReference type="Proteomes" id="UP000000254">
    <property type="component" value="Chromosome"/>
</dbReference>
<dbReference type="GO" id="GO:0003677">
    <property type="term" value="F:DNA binding"/>
    <property type="evidence" value="ECO:0007669"/>
    <property type="project" value="UniProtKB-KW"/>
</dbReference>
<dbReference type="GO" id="GO:0006355">
    <property type="term" value="P:regulation of DNA-templated transcription"/>
    <property type="evidence" value="ECO:0007669"/>
    <property type="project" value="InterPro"/>
</dbReference>
<dbReference type="GO" id="GO:0006367">
    <property type="term" value="P:transcription initiation at RNA polymerase II promoter"/>
    <property type="evidence" value="ECO:0007669"/>
    <property type="project" value="InterPro"/>
</dbReference>
<dbReference type="Gene3D" id="1.10.10.10">
    <property type="entry name" value="Winged helix-like DNA-binding domain superfamily/Winged helix DNA-binding domain"/>
    <property type="match status" value="1"/>
</dbReference>
<dbReference type="HAMAP" id="MF_01909">
    <property type="entry name" value="TFE_arch"/>
    <property type="match status" value="1"/>
</dbReference>
<dbReference type="InterPro" id="IPR016481">
    <property type="entry name" value="TF_E_archaea"/>
</dbReference>
<dbReference type="InterPro" id="IPR039997">
    <property type="entry name" value="TFE"/>
</dbReference>
<dbReference type="InterPro" id="IPR017919">
    <property type="entry name" value="TFIIE/TFIIEa_HTH"/>
</dbReference>
<dbReference type="InterPro" id="IPR002853">
    <property type="entry name" value="TFIIE_asu"/>
</dbReference>
<dbReference type="InterPro" id="IPR024550">
    <property type="entry name" value="TFIIEa/SarR/Rpc3_HTH_dom"/>
</dbReference>
<dbReference type="InterPro" id="IPR036388">
    <property type="entry name" value="WH-like_DNA-bd_sf"/>
</dbReference>
<dbReference type="InterPro" id="IPR036390">
    <property type="entry name" value="WH_DNA-bd_sf"/>
</dbReference>
<dbReference type="PANTHER" id="PTHR13097:SF7">
    <property type="entry name" value="GENERAL TRANSCRIPTION FACTOR IIE SUBUNIT 1"/>
    <property type="match status" value="1"/>
</dbReference>
<dbReference type="PANTHER" id="PTHR13097">
    <property type="entry name" value="TRANSCRIPTION INITIATION FACTOR IIE, ALPHA SUBUNIT"/>
    <property type="match status" value="1"/>
</dbReference>
<dbReference type="Pfam" id="PF02002">
    <property type="entry name" value="TFIIE_alpha"/>
    <property type="match status" value="1"/>
</dbReference>
<dbReference type="PIRSF" id="PIRSF006373">
    <property type="entry name" value="TF_E_archaea"/>
    <property type="match status" value="1"/>
</dbReference>
<dbReference type="SMART" id="SM00531">
    <property type="entry name" value="TFIIE"/>
    <property type="match status" value="1"/>
</dbReference>
<dbReference type="SUPFAM" id="SSF46785">
    <property type="entry name" value="Winged helix' DNA-binding domain"/>
    <property type="match status" value="1"/>
</dbReference>
<dbReference type="PROSITE" id="PS51344">
    <property type="entry name" value="HTH_TFE_IIE"/>
    <property type="match status" value="1"/>
</dbReference>
<gene>
    <name evidence="1" type="primary">tfe</name>
    <name type="ordered locus">Smar_0918</name>
</gene>
<sequence length="156" mass="18045">MYGEKAKKVLLHIIRSGGIVAEETLGKDIGMKSNEARKILQQLADEAILRYKTGRVGDKTLHLWILNIDQIEGILIARLKKTREKLLIRLNYEKNNTFLKCPLCGRRYTFDEAFENDFLCPYDGEQLIEYDNSEEIRILEEKIKEITDELSRIGAA</sequence>
<evidence type="ECO:0000255" key="1">
    <source>
        <dbReference type="HAMAP-Rule" id="MF_01909"/>
    </source>
</evidence>
<name>TFE_STAMF</name>
<keyword id="KW-0238">DNA-binding</keyword>
<keyword id="KW-1185">Reference proteome</keyword>
<keyword id="KW-0804">Transcription</keyword>
<keyword id="KW-0805">Transcription regulation</keyword>
<comment type="function">
    <text evidence="1">Transcription factor that plays a role in the activation of archaeal genes transcribed by RNA polymerase. Facilitates transcription initiation by enhancing TATA-box recognition by TATA-box-binding protein (Tbp), and transcription factor B (Tfb) and RNA polymerase recruitment. Not absolutely required for transcription in vitro, but particularly important in cases where Tbp or Tfb function is not optimal. It dynamically alters the nucleic acid-binding properties of RNA polymerases by stabilizing the initiation complex and destabilizing elongation complexes. Seems to translocate with the RNA polymerase following initiation and acts by binding to the non template strand of the transcription bubble in elongation complexes.</text>
</comment>
<comment type="subunit">
    <text evidence="1">Monomer. Interaction with RNA polymerase subunits RpoF and RpoE is necessary for Tfe stimulatory transcription activity. Able to interact with Tbp and RNA polymerase in the absence of DNA promoter. Interacts both with the preinitiation and elongation complexes.</text>
</comment>
<comment type="domain">
    <text evidence="1">The winged helix domain is involved in binding to DNA in the preinitiation complex.</text>
</comment>
<comment type="similarity">
    <text evidence="1">Belongs to the TFE family.</text>
</comment>
<organism>
    <name type="scientific">Staphylothermus marinus (strain ATCC 43588 / DSM 3639 / JCM 9404 / F1)</name>
    <dbReference type="NCBI Taxonomy" id="399550"/>
    <lineage>
        <taxon>Archaea</taxon>
        <taxon>Thermoproteota</taxon>
        <taxon>Thermoprotei</taxon>
        <taxon>Desulfurococcales</taxon>
        <taxon>Desulfurococcaceae</taxon>
        <taxon>Staphylothermus</taxon>
    </lineage>
</organism>
<feature type="chain" id="PRO_0000326622" description="Transcription factor E">
    <location>
        <begin position="1"/>
        <end position="156"/>
    </location>
</feature>
<feature type="domain" description="HTH TFE/IIEalpha-type" evidence="1">
    <location>
        <begin position="1"/>
        <end position="72"/>
    </location>
</feature>
<accession>A3DN07</accession>
<proteinExistence type="inferred from homology"/>
<protein>
    <recommendedName>
        <fullName evidence="1">Transcription factor E</fullName>
        <shortName evidence="1">TFE</shortName>
    </recommendedName>
    <alternativeName>
        <fullName evidence="1">TFIIE subunit alpha homolog</fullName>
    </alternativeName>
    <alternativeName>
        <fullName evidence="1">Transcription initiation factor TFIIE</fullName>
    </alternativeName>
</protein>